<evidence type="ECO:0000255" key="1">
    <source>
        <dbReference type="HAMAP-Rule" id="MF_00488"/>
    </source>
</evidence>
<keyword id="KW-0021">Allosteric enzyme</keyword>
<keyword id="KW-0963">Cytoplasm</keyword>
<keyword id="KW-0520">NAD</keyword>
<keyword id="KW-0560">Oxidoreductase</keyword>
<keyword id="KW-1185">Reference proteome</keyword>
<name>LDH2_CLOAB</name>
<comment type="function">
    <text evidence="1">Catalyzes the conversion of lactate to pyruvate.</text>
</comment>
<comment type="catalytic activity">
    <reaction evidence="1">
        <text>(S)-lactate + NAD(+) = pyruvate + NADH + H(+)</text>
        <dbReference type="Rhea" id="RHEA:23444"/>
        <dbReference type="ChEBI" id="CHEBI:15361"/>
        <dbReference type="ChEBI" id="CHEBI:15378"/>
        <dbReference type="ChEBI" id="CHEBI:16651"/>
        <dbReference type="ChEBI" id="CHEBI:57540"/>
        <dbReference type="ChEBI" id="CHEBI:57945"/>
        <dbReference type="EC" id="1.1.1.27"/>
    </reaction>
</comment>
<comment type="activity regulation">
    <text evidence="1">Allosterically activated by fructose 1,6-bisphosphate (FBP).</text>
</comment>
<comment type="pathway">
    <text evidence="1">Fermentation; pyruvate fermentation to lactate; (S)-lactate from pyruvate: step 1/1.</text>
</comment>
<comment type="subunit">
    <text evidence="1">Homotetramer.</text>
</comment>
<comment type="subcellular location">
    <subcellularLocation>
        <location evidence="1">Cytoplasm</location>
    </subcellularLocation>
</comment>
<comment type="similarity">
    <text evidence="1">Belongs to the LDH/MDH superfamily. LDH family.</text>
</comment>
<gene>
    <name evidence="1" type="primary">ldh2</name>
    <name type="ordered locus">CA_C3552</name>
</gene>
<sequence>MNFVKNKLVVVGAGMVGSAVLNSVLSLNLLSEVVIIDINDNKAKGEALDASHTTSFAYSPNVKVRAGNYEDCADAQIIVITAGPSLKPDDKLDRLVLADTNVKVTDSIMKNICKYTKDAIIIVVTNPVDIATYYCQNNFDYPKNKIIGTGTLLDTARMRKIIGKKYNVDSKNVHGYVLGEHGGSSFTSWSDVNIAGIPFNQLNDIFKDHYKVDKDEVDKEVRDSGIEVLKLKGYTSAGIAMSVSRLVKAMLLNEQSILPVSSTLEGEYGINDVALSIPCIITSNGIEKKLEIPLSKDEVEKLNKSADNLKSIIKGLNTNK</sequence>
<accession>Q97DC6</accession>
<reference key="1">
    <citation type="journal article" date="2001" name="J. Bacteriol.">
        <title>Genome sequence and comparative analysis of the solvent-producing bacterium Clostridium acetobutylicum.</title>
        <authorList>
            <person name="Noelling J."/>
            <person name="Breton G."/>
            <person name="Omelchenko M.V."/>
            <person name="Makarova K.S."/>
            <person name="Zeng Q."/>
            <person name="Gibson R."/>
            <person name="Lee H.M."/>
            <person name="Dubois J."/>
            <person name="Qiu D."/>
            <person name="Hitti J."/>
            <person name="Wolf Y.I."/>
            <person name="Tatusov R.L."/>
            <person name="Sabathe F."/>
            <person name="Doucette-Stamm L.A."/>
            <person name="Soucaille P."/>
            <person name="Daly M.J."/>
            <person name="Bennett G.N."/>
            <person name="Koonin E.V."/>
            <person name="Smith D.R."/>
        </authorList>
    </citation>
    <scope>NUCLEOTIDE SEQUENCE [LARGE SCALE GENOMIC DNA]</scope>
    <source>
        <strain>ATCC 824 / DSM 792 / JCM 1419 / IAM 19013 / LMG 5710 / NBRC 13948 / NRRL B-527 / VKM B-1787 / 2291 / W</strain>
    </source>
</reference>
<feature type="chain" id="PRO_0000168334" description="L-lactate dehydrogenase 2">
    <location>
        <begin position="1"/>
        <end position="320"/>
    </location>
</feature>
<feature type="active site" description="Proton acceptor" evidence="1">
    <location>
        <position position="181"/>
    </location>
</feature>
<feature type="binding site" evidence="1">
    <location>
        <position position="16"/>
    </location>
    <ligand>
        <name>NAD(+)</name>
        <dbReference type="ChEBI" id="CHEBI:57540"/>
    </ligand>
</feature>
<feature type="binding site" evidence="1">
    <location>
        <position position="37"/>
    </location>
    <ligand>
        <name>NAD(+)</name>
        <dbReference type="ChEBI" id="CHEBI:57540"/>
    </ligand>
</feature>
<feature type="binding site" evidence="1">
    <location>
        <position position="42"/>
    </location>
    <ligand>
        <name>NAD(+)</name>
        <dbReference type="ChEBI" id="CHEBI:57540"/>
    </ligand>
</feature>
<feature type="binding site" evidence="1">
    <location>
        <position position="69"/>
    </location>
    <ligand>
        <name>NAD(+)</name>
        <dbReference type="ChEBI" id="CHEBI:57540"/>
    </ligand>
</feature>
<feature type="binding site" evidence="1">
    <location>
        <position position="94"/>
    </location>
    <ligand>
        <name>substrate</name>
    </ligand>
</feature>
<feature type="binding site" evidence="1">
    <location>
        <position position="107"/>
    </location>
    <ligand>
        <name>NAD(+)</name>
        <dbReference type="ChEBI" id="CHEBI:57540"/>
    </ligand>
</feature>
<feature type="binding site" evidence="1">
    <location>
        <begin position="124"/>
        <end position="126"/>
    </location>
    <ligand>
        <name>NAD(+)</name>
        <dbReference type="ChEBI" id="CHEBI:57540"/>
    </ligand>
</feature>
<feature type="binding site" evidence="1">
    <location>
        <begin position="126"/>
        <end position="129"/>
    </location>
    <ligand>
        <name>substrate</name>
    </ligand>
</feature>
<feature type="binding site" evidence="1">
    <location>
        <position position="149"/>
    </location>
    <ligand>
        <name>NAD(+)</name>
        <dbReference type="ChEBI" id="CHEBI:57540"/>
    </ligand>
</feature>
<feature type="binding site" evidence="1">
    <location>
        <begin position="154"/>
        <end position="157"/>
    </location>
    <ligand>
        <name>substrate</name>
    </ligand>
</feature>
<feature type="binding site" evidence="1">
    <location>
        <position position="159"/>
    </location>
    <ligand>
        <name>beta-D-fructose 1,6-bisphosphate</name>
        <dbReference type="ChEBI" id="CHEBI:32966"/>
        <note>allosteric activator</note>
    </ligand>
</feature>
<feature type="binding site" evidence="1">
    <location>
        <position position="174"/>
    </location>
    <ligand>
        <name>beta-D-fructose 1,6-bisphosphate</name>
        <dbReference type="ChEBI" id="CHEBI:32966"/>
        <note>allosteric activator</note>
    </ligand>
</feature>
<feature type="binding site" evidence="1">
    <location>
        <position position="235"/>
    </location>
    <ligand>
        <name>substrate</name>
    </ligand>
</feature>
<protein>
    <recommendedName>
        <fullName evidence="1">L-lactate dehydrogenase 2</fullName>
        <shortName evidence="1">L-LDH 2</shortName>
        <ecNumber evidence="1">1.1.1.27</ecNumber>
    </recommendedName>
</protein>
<organism>
    <name type="scientific">Clostridium acetobutylicum (strain ATCC 824 / DSM 792 / JCM 1419 / IAM 19013 / LMG 5710 / NBRC 13948 / NRRL B-527 / VKM B-1787 / 2291 / W)</name>
    <dbReference type="NCBI Taxonomy" id="272562"/>
    <lineage>
        <taxon>Bacteria</taxon>
        <taxon>Bacillati</taxon>
        <taxon>Bacillota</taxon>
        <taxon>Clostridia</taxon>
        <taxon>Eubacteriales</taxon>
        <taxon>Clostridiaceae</taxon>
        <taxon>Clostridium</taxon>
    </lineage>
</organism>
<dbReference type="EC" id="1.1.1.27" evidence="1"/>
<dbReference type="EMBL" id="AE001437">
    <property type="protein sequence ID" value="AAK81477.1"/>
    <property type="molecule type" value="Genomic_DNA"/>
</dbReference>
<dbReference type="PIR" id="B97336">
    <property type="entry name" value="B97336"/>
</dbReference>
<dbReference type="RefSeq" id="NP_350137.1">
    <property type="nucleotide sequence ID" value="NC_003030.1"/>
</dbReference>
<dbReference type="RefSeq" id="WP_010966817.1">
    <property type="nucleotide sequence ID" value="NC_003030.1"/>
</dbReference>
<dbReference type="SMR" id="Q97DC6"/>
<dbReference type="STRING" id="272562.CA_C3552"/>
<dbReference type="KEGG" id="cac:CA_C3552"/>
<dbReference type="PATRIC" id="fig|272562.8.peg.3741"/>
<dbReference type="eggNOG" id="COG0039">
    <property type="taxonomic scope" value="Bacteria"/>
</dbReference>
<dbReference type="HOGENOM" id="CLU_045401_1_2_9"/>
<dbReference type="OrthoDB" id="9802969at2"/>
<dbReference type="UniPathway" id="UPA00554">
    <property type="reaction ID" value="UER00611"/>
</dbReference>
<dbReference type="Proteomes" id="UP000000814">
    <property type="component" value="Chromosome"/>
</dbReference>
<dbReference type="GO" id="GO:0005737">
    <property type="term" value="C:cytoplasm"/>
    <property type="evidence" value="ECO:0007669"/>
    <property type="project" value="UniProtKB-SubCell"/>
</dbReference>
<dbReference type="GO" id="GO:0004459">
    <property type="term" value="F:L-lactate dehydrogenase activity"/>
    <property type="evidence" value="ECO:0007669"/>
    <property type="project" value="UniProtKB-UniRule"/>
</dbReference>
<dbReference type="GO" id="GO:0006096">
    <property type="term" value="P:glycolytic process"/>
    <property type="evidence" value="ECO:0007669"/>
    <property type="project" value="UniProtKB-UniRule"/>
</dbReference>
<dbReference type="GO" id="GO:0006089">
    <property type="term" value="P:lactate metabolic process"/>
    <property type="evidence" value="ECO:0007669"/>
    <property type="project" value="TreeGrafter"/>
</dbReference>
<dbReference type="CDD" id="cd05290">
    <property type="entry name" value="LDH_3"/>
    <property type="match status" value="1"/>
</dbReference>
<dbReference type="Gene3D" id="3.90.110.10">
    <property type="entry name" value="Lactate dehydrogenase/glycoside hydrolase, family 4, C-terminal"/>
    <property type="match status" value="1"/>
</dbReference>
<dbReference type="Gene3D" id="3.40.50.720">
    <property type="entry name" value="NAD(P)-binding Rossmann-like Domain"/>
    <property type="match status" value="1"/>
</dbReference>
<dbReference type="HAMAP" id="MF_00488">
    <property type="entry name" value="Lactate_dehydrog"/>
    <property type="match status" value="1"/>
</dbReference>
<dbReference type="InterPro" id="IPR001557">
    <property type="entry name" value="L-lactate/malate_DH"/>
</dbReference>
<dbReference type="InterPro" id="IPR011304">
    <property type="entry name" value="L-lactate_DH"/>
</dbReference>
<dbReference type="InterPro" id="IPR022383">
    <property type="entry name" value="Lactate/malate_DH_C"/>
</dbReference>
<dbReference type="InterPro" id="IPR001236">
    <property type="entry name" value="Lactate/malate_DH_N"/>
</dbReference>
<dbReference type="InterPro" id="IPR015955">
    <property type="entry name" value="Lactate_DH/Glyco_Ohase_4_C"/>
</dbReference>
<dbReference type="InterPro" id="IPR036291">
    <property type="entry name" value="NAD(P)-bd_dom_sf"/>
</dbReference>
<dbReference type="NCBIfam" id="TIGR01771">
    <property type="entry name" value="L-LDH-NAD"/>
    <property type="match status" value="1"/>
</dbReference>
<dbReference type="PANTHER" id="PTHR43128">
    <property type="entry name" value="L-2-HYDROXYCARBOXYLATE DEHYDROGENASE (NAD(P)(+))"/>
    <property type="match status" value="1"/>
</dbReference>
<dbReference type="PANTHER" id="PTHR43128:SF16">
    <property type="entry name" value="L-LACTATE DEHYDROGENASE"/>
    <property type="match status" value="1"/>
</dbReference>
<dbReference type="Pfam" id="PF02866">
    <property type="entry name" value="Ldh_1_C"/>
    <property type="match status" value="1"/>
</dbReference>
<dbReference type="Pfam" id="PF00056">
    <property type="entry name" value="Ldh_1_N"/>
    <property type="match status" value="1"/>
</dbReference>
<dbReference type="PIRSF" id="PIRSF000102">
    <property type="entry name" value="Lac_mal_DH"/>
    <property type="match status" value="1"/>
</dbReference>
<dbReference type="PRINTS" id="PR00086">
    <property type="entry name" value="LLDHDRGNASE"/>
</dbReference>
<dbReference type="SUPFAM" id="SSF56327">
    <property type="entry name" value="LDH C-terminal domain-like"/>
    <property type="match status" value="1"/>
</dbReference>
<dbReference type="SUPFAM" id="SSF51735">
    <property type="entry name" value="NAD(P)-binding Rossmann-fold domains"/>
    <property type="match status" value="1"/>
</dbReference>
<proteinExistence type="inferred from homology"/>